<accession>P57722</accession>
<accession>Q8BSB0</accession>
<accession>Q8C544</accession>
<protein>
    <recommendedName>
        <fullName>Poly(rC)-binding protein 3</fullName>
    </recommendedName>
    <alternativeName>
        <fullName>Alpha-CP3</fullName>
    </alternativeName>
</protein>
<keyword id="KW-0025">Alternative splicing</keyword>
<keyword id="KW-0963">Cytoplasm</keyword>
<keyword id="KW-0238">DNA-binding</keyword>
<keyword id="KW-1185">Reference proteome</keyword>
<keyword id="KW-0677">Repeat</keyword>
<keyword id="KW-0687">Ribonucleoprotein</keyword>
<keyword id="KW-0694">RNA-binding</keyword>
<organism>
    <name type="scientific">Mus musculus</name>
    <name type="common">Mouse</name>
    <dbReference type="NCBI Taxonomy" id="10090"/>
    <lineage>
        <taxon>Eukaryota</taxon>
        <taxon>Metazoa</taxon>
        <taxon>Chordata</taxon>
        <taxon>Craniata</taxon>
        <taxon>Vertebrata</taxon>
        <taxon>Euteleostomi</taxon>
        <taxon>Mammalia</taxon>
        <taxon>Eutheria</taxon>
        <taxon>Euarchontoglires</taxon>
        <taxon>Glires</taxon>
        <taxon>Rodentia</taxon>
        <taxon>Myomorpha</taxon>
        <taxon>Muroidea</taxon>
        <taxon>Muridae</taxon>
        <taxon>Murinae</taxon>
        <taxon>Mus</taxon>
        <taxon>Mus</taxon>
    </lineage>
</organism>
<dbReference type="EMBL" id="AF176327">
    <property type="protein sequence ID" value="AAG09238.1"/>
    <property type="status" value="ALT_INIT"/>
    <property type="molecule type" value="mRNA"/>
</dbReference>
<dbReference type="EMBL" id="AK034811">
    <property type="protein sequence ID" value="BAC28838.1"/>
    <property type="molecule type" value="mRNA"/>
</dbReference>
<dbReference type="EMBL" id="AK079564">
    <property type="protein sequence ID" value="BAC37686.1"/>
    <property type="molecule type" value="mRNA"/>
</dbReference>
<dbReference type="CCDS" id="CCDS35946.2">
    <molecule id="P57722-1"/>
</dbReference>
<dbReference type="CCDS" id="CCDS83716.1">
    <molecule id="P57722-2"/>
</dbReference>
<dbReference type="RefSeq" id="NP_001334145.1">
    <molecule id="P57722-2"/>
    <property type="nucleotide sequence ID" value="NM_001347216.2"/>
</dbReference>
<dbReference type="RefSeq" id="NP_001416228.1">
    <molecule id="P57722-1"/>
    <property type="nucleotide sequence ID" value="NM_001429299.1"/>
</dbReference>
<dbReference type="RefSeq" id="NP_001416229.1">
    <molecule id="P57722-2"/>
    <property type="nucleotide sequence ID" value="NM_001429300.1"/>
</dbReference>
<dbReference type="RefSeq" id="NP_067543.2">
    <molecule id="P57722-1"/>
    <property type="nucleotide sequence ID" value="NM_021568.3"/>
</dbReference>
<dbReference type="RefSeq" id="XP_017169527.1">
    <molecule id="P57722-1"/>
    <property type="nucleotide sequence ID" value="XM_017314038.1"/>
</dbReference>
<dbReference type="RefSeq" id="XP_030101053.1">
    <molecule id="P57722-1"/>
    <property type="nucleotide sequence ID" value="XM_030245193.2"/>
</dbReference>
<dbReference type="RefSeq" id="XP_030101054.1">
    <molecule id="P57722-2"/>
    <property type="nucleotide sequence ID" value="XM_030245194.2"/>
</dbReference>
<dbReference type="RefSeq" id="XP_036011798.1">
    <molecule id="P57722-1"/>
    <property type="nucleotide sequence ID" value="XM_036155905.1"/>
</dbReference>
<dbReference type="RefSeq" id="XP_036011799.1">
    <molecule id="P57722-1"/>
    <property type="nucleotide sequence ID" value="XM_036155906.1"/>
</dbReference>
<dbReference type="SMR" id="P57722"/>
<dbReference type="BioGRID" id="208528">
    <property type="interactions" value="9"/>
</dbReference>
<dbReference type="FunCoup" id="P57722">
    <property type="interactions" value="1822"/>
</dbReference>
<dbReference type="IntAct" id="P57722">
    <property type="interactions" value="1"/>
</dbReference>
<dbReference type="STRING" id="10090.ENSMUSP00000001148"/>
<dbReference type="GlyGen" id="P57722">
    <property type="glycosylation" value="1 site, 1 N-linked glycan (1 site)"/>
</dbReference>
<dbReference type="iPTMnet" id="P57722"/>
<dbReference type="PhosphoSitePlus" id="P57722"/>
<dbReference type="SwissPalm" id="P57722"/>
<dbReference type="jPOST" id="P57722"/>
<dbReference type="PaxDb" id="10090-ENSMUSP00000001148"/>
<dbReference type="PeptideAtlas" id="P57722"/>
<dbReference type="ProteomicsDB" id="288265">
    <molecule id="P57722-1"/>
</dbReference>
<dbReference type="ProteomicsDB" id="288266">
    <molecule id="P57722-2"/>
</dbReference>
<dbReference type="Pumba" id="P57722"/>
<dbReference type="Antibodypedia" id="24497">
    <property type="antibodies" value="85 antibodies from 19 providers"/>
</dbReference>
<dbReference type="DNASU" id="59093"/>
<dbReference type="Ensembl" id="ENSMUST00000001148.11">
    <molecule id="P57722-1"/>
    <property type="protein sequence ID" value="ENSMUSP00000001148.5"/>
    <property type="gene ID" value="ENSMUSG00000001120.16"/>
</dbReference>
<dbReference type="Ensembl" id="ENSMUST00000105411.9">
    <molecule id="P57722-2"/>
    <property type="protein sequence ID" value="ENSMUSP00000101051.3"/>
    <property type="gene ID" value="ENSMUSG00000001120.16"/>
</dbReference>
<dbReference type="Ensembl" id="ENSMUST00000168465.9">
    <molecule id="P57722-1"/>
    <property type="protein sequence ID" value="ENSMUSP00000129465.3"/>
    <property type="gene ID" value="ENSMUSG00000001120.16"/>
</dbReference>
<dbReference type="GeneID" id="59093"/>
<dbReference type="KEGG" id="mmu:59093"/>
<dbReference type="UCSC" id="uc007fuz.2">
    <molecule id="P57722-1"/>
    <property type="organism name" value="mouse"/>
</dbReference>
<dbReference type="UCSC" id="uc007fva.2">
    <molecule id="P57722-2"/>
    <property type="organism name" value="mouse"/>
</dbReference>
<dbReference type="AGR" id="MGI:1890470"/>
<dbReference type="CTD" id="54039"/>
<dbReference type="MGI" id="MGI:1890470">
    <property type="gene designation" value="Pcbp3"/>
</dbReference>
<dbReference type="VEuPathDB" id="HostDB:ENSMUSG00000001120"/>
<dbReference type="eggNOG" id="KOG2190">
    <property type="taxonomic scope" value="Eukaryota"/>
</dbReference>
<dbReference type="GeneTree" id="ENSGT00940000162185"/>
<dbReference type="HOGENOM" id="CLU_022670_0_1_1"/>
<dbReference type="InParanoid" id="P57722"/>
<dbReference type="OMA" id="MQVVPYS"/>
<dbReference type="OrthoDB" id="442947at2759"/>
<dbReference type="PhylomeDB" id="P57722"/>
<dbReference type="TreeFam" id="TF318292"/>
<dbReference type="BioGRID-ORCS" id="59093">
    <property type="hits" value="1 hit in 80 CRISPR screens"/>
</dbReference>
<dbReference type="ChiTaRS" id="Pcbp3">
    <property type="organism name" value="mouse"/>
</dbReference>
<dbReference type="PRO" id="PR:P57722"/>
<dbReference type="Proteomes" id="UP000000589">
    <property type="component" value="Chromosome 10"/>
</dbReference>
<dbReference type="RNAct" id="P57722">
    <property type="molecule type" value="protein"/>
</dbReference>
<dbReference type="Bgee" id="ENSMUSG00000001120">
    <property type="expression patterns" value="Expressed in retinal neural layer and 259 other cell types or tissues"/>
</dbReference>
<dbReference type="ExpressionAtlas" id="P57722">
    <property type="expression patterns" value="baseline and differential"/>
</dbReference>
<dbReference type="GO" id="GO:0005737">
    <property type="term" value="C:cytoplasm"/>
    <property type="evidence" value="ECO:0007669"/>
    <property type="project" value="UniProtKB-SubCell"/>
</dbReference>
<dbReference type="GO" id="GO:1990904">
    <property type="term" value="C:ribonucleoprotein complex"/>
    <property type="evidence" value="ECO:0007669"/>
    <property type="project" value="UniProtKB-KW"/>
</dbReference>
<dbReference type="GO" id="GO:1990829">
    <property type="term" value="F:C-rich single-stranded DNA binding"/>
    <property type="evidence" value="ECO:0000314"/>
    <property type="project" value="MGI"/>
</dbReference>
<dbReference type="GO" id="GO:0003723">
    <property type="term" value="F:RNA binding"/>
    <property type="evidence" value="ECO:0007669"/>
    <property type="project" value="UniProtKB-KW"/>
</dbReference>
<dbReference type="GO" id="GO:0000122">
    <property type="term" value="P:negative regulation of transcription by RNA polymerase II"/>
    <property type="evidence" value="ECO:0000314"/>
    <property type="project" value="MGI"/>
</dbReference>
<dbReference type="CDD" id="cd22519">
    <property type="entry name" value="KH-I_PCBP3_rpt2"/>
    <property type="match status" value="1"/>
</dbReference>
<dbReference type="CDD" id="cd22522">
    <property type="entry name" value="KH-I_PCBP3_rpt3"/>
    <property type="match status" value="1"/>
</dbReference>
<dbReference type="FunFam" id="3.30.1370.10:FF:000002">
    <property type="entry name" value="poly(RC)-binding protein 2 isoform X1"/>
    <property type="match status" value="1"/>
</dbReference>
<dbReference type="FunFam" id="3.30.1370.10:FF:000003">
    <property type="entry name" value="poly(RC)-binding protein 2 isoform X1"/>
    <property type="match status" value="1"/>
</dbReference>
<dbReference type="FunFam" id="3.30.1370.10:FF:000005">
    <property type="entry name" value="poly(RC)-binding protein 2 isoform X1"/>
    <property type="match status" value="1"/>
</dbReference>
<dbReference type="Gene3D" id="3.30.1370.10">
    <property type="entry name" value="K Homology domain, type 1"/>
    <property type="match status" value="3"/>
</dbReference>
<dbReference type="InterPro" id="IPR004087">
    <property type="entry name" value="KH_dom"/>
</dbReference>
<dbReference type="InterPro" id="IPR004088">
    <property type="entry name" value="KH_dom_type_1"/>
</dbReference>
<dbReference type="InterPro" id="IPR036612">
    <property type="entry name" value="KH_dom_type_1_sf"/>
</dbReference>
<dbReference type="PANTHER" id="PTHR10288">
    <property type="entry name" value="KH DOMAIN CONTAINING RNA BINDING PROTEIN"/>
    <property type="match status" value="1"/>
</dbReference>
<dbReference type="Pfam" id="PF00013">
    <property type="entry name" value="KH_1"/>
    <property type="match status" value="3"/>
</dbReference>
<dbReference type="SMART" id="SM00322">
    <property type="entry name" value="KH"/>
    <property type="match status" value="3"/>
</dbReference>
<dbReference type="SUPFAM" id="SSF54791">
    <property type="entry name" value="Eukaryotic type KH-domain (KH-domain type I)"/>
    <property type="match status" value="3"/>
</dbReference>
<dbReference type="PROSITE" id="PS50084">
    <property type="entry name" value="KH_TYPE_1"/>
    <property type="match status" value="3"/>
</dbReference>
<evidence type="ECO:0000250" key="1"/>
<evidence type="ECO:0000255" key="2">
    <source>
        <dbReference type="PROSITE-ProRule" id="PRU00117"/>
    </source>
</evidence>
<evidence type="ECO:0000269" key="3">
    <source>
    </source>
</evidence>
<evidence type="ECO:0000303" key="4">
    <source>
    </source>
</evidence>
<evidence type="ECO:0000305" key="5"/>
<gene>
    <name type="primary">Pcbp3</name>
</gene>
<name>PCBP3_MOUSE</name>
<proteinExistence type="evidence at protein level"/>
<sequence length="371" mass="39294">MGEGDAIWAPPILPHSTLGTLSHHPELHFGGKMESKVSEGGLNVTLTIRLLMHGKEVGSIIGKKGETVKKMREESGARINISEGNCPERIVTITGPTDAIFKAFAMIAYKFEEDIINSMSNSPATSKPPVTLRLVVPASQCGSLIGKGGSKIKEIRESTGAQVQVAGDMLPNSTERAVTISGTPDAIIQCVKQICVVMLESPPKGATIPYRPKPASTPVIFAGGQAYTIQGQYAIPHPDQLTKLHQLAMQQTPFPPLGQTNPAFPGEKLPLHSSEEAQNLMGQSSGLDASPPASTHELTIPNDLIGCIIGRQGTKINEIRQMSGAQIKIANATEGSSERQITITGTPANISLAQYLINARLTSEVTGMGAL</sequence>
<reference key="1">
    <citation type="journal article" date="2000" name="Genomics">
        <title>Identification of two novel mammalian genes establishes a subfamily of KH-domain RNA-binding proteins.</title>
        <authorList>
            <person name="Makeyev A.V."/>
            <person name="Liebhaber S.A."/>
        </authorList>
    </citation>
    <scope>NUCLEOTIDE SEQUENCE [MRNA] (ISOFORM 1)</scope>
    <scope>TISSUE SPECIFICITY</scope>
</reference>
<reference key="2">
    <citation type="journal article" date="2005" name="Science">
        <title>The transcriptional landscape of the mammalian genome.</title>
        <authorList>
            <person name="Carninci P."/>
            <person name="Kasukawa T."/>
            <person name="Katayama S."/>
            <person name="Gough J."/>
            <person name="Frith M.C."/>
            <person name="Maeda N."/>
            <person name="Oyama R."/>
            <person name="Ravasi T."/>
            <person name="Lenhard B."/>
            <person name="Wells C."/>
            <person name="Kodzius R."/>
            <person name="Shimokawa K."/>
            <person name="Bajic V.B."/>
            <person name="Brenner S.E."/>
            <person name="Batalov S."/>
            <person name="Forrest A.R."/>
            <person name="Zavolan M."/>
            <person name="Davis M.J."/>
            <person name="Wilming L.G."/>
            <person name="Aidinis V."/>
            <person name="Allen J.E."/>
            <person name="Ambesi-Impiombato A."/>
            <person name="Apweiler R."/>
            <person name="Aturaliya R.N."/>
            <person name="Bailey T.L."/>
            <person name="Bansal M."/>
            <person name="Baxter L."/>
            <person name="Beisel K.W."/>
            <person name="Bersano T."/>
            <person name="Bono H."/>
            <person name="Chalk A.M."/>
            <person name="Chiu K.P."/>
            <person name="Choudhary V."/>
            <person name="Christoffels A."/>
            <person name="Clutterbuck D.R."/>
            <person name="Crowe M.L."/>
            <person name="Dalla E."/>
            <person name="Dalrymple B.P."/>
            <person name="de Bono B."/>
            <person name="Della Gatta G."/>
            <person name="di Bernardo D."/>
            <person name="Down T."/>
            <person name="Engstrom P."/>
            <person name="Fagiolini M."/>
            <person name="Faulkner G."/>
            <person name="Fletcher C.F."/>
            <person name="Fukushima T."/>
            <person name="Furuno M."/>
            <person name="Futaki S."/>
            <person name="Gariboldi M."/>
            <person name="Georgii-Hemming P."/>
            <person name="Gingeras T.R."/>
            <person name="Gojobori T."/>
            <person name="Green R.E."/>
            <person name="Gustincich S."/>
            <person name="Harbers M."/>
            <person name="Hayashi Y."/>
            <person name="Hensch T.K."/>
            <person name="Hirokawa N."/>
            <person name="Hill D."/>
            <person name="Huminiecki L."/>
            <person name="Iacono M."/>
            <person name="Ikeo K."/>
            <person name="Iwama A."/>
            <person name="Ishikawa T."/>
            <person name="Jakt M."/>
            <person name="Kanapin A."/>
            <person name="Katoh M."/>
            <person name="Kawasawa Y."/>
            <person name="Kelso J."/>
            <person name="Kitamura H."/>
            <person name="Kitano H."/>
            <person name="Kollias G."/>
            <person name="Krishnan S.P."/>
            <person name="Kruger A."/>
            <person name="Kummerfeld S.K."/>
            <person name="Kurochkin I.V."/>
            <person name="Lareau L.F."/>
            <person name="Lazarevic D."/>
            <person name="Lipovich L."/>
            <person name="Liu J."/>
            <person name="Liuni S."/>
            <person name="McWilliam S."/>
            <person name="Madan Babu M."/>
            <person name="Madera M."/>
            <person name="Marchionni L."/>
            <person name="Matsuda H."/>
            <person name="Matsuzawa S."/>
            <person name="Miki H."/>
            <person name="Mignone F."/>
            <person name="Miyake S."/>
            <person name="Morris K."/>
            <person name="Mottagui-Tabar S."/>
            <person name="Mulder N."/>
            <person name="Nakano N."/>
            <person name="Nakauchi H."/>
            <person name="Ng P."/>
            <person name="Nilsson R."/>
            <person name="Nishiguchi S."/>
            <person name="Nishikawa S."/>
            <person name="Nori F."/>
            <person name="Ohara O."/>
            <person name="Okazaki Y."/>
            <person name="Orlando V."/>
            <person name="Pang K.C."/>
            <person name="Pavan W.J."/>
            <person name="Pavesi G."/>
            <person name="Pesole G."/>
            <person name="Petrovsky N."/>
            <person name="Piazza S."/>
            <person name="Reed J."/>
            <person name="Reid J.F."/>
            <person name="Ring B.Z."/>
            <person name="Ringwald M."/>
            <person name="Rost B."/>
            <person name="Ruan Y."/>
            <person name="Salzberg S.L."/>
            <person name="Sandelin A."/>
            <person name="Schneider C."/>
            <person name="Schoenbach C."/>
            <person name="Sekiguchi K."/>
            <person name="Semple C.A."/>
            <person name="Seno S."/>
            <person name="Sessa L."/>
            <person name="Sheng Y."/>
            <person name="Shibata Y."/>
            <person name="Shimada H."/>
            <person name="Shimada K."/>
            <person name="Silva D."/>
            <person name="Sinclair B."/>
            <person name="Sperling S."/>
            <person name="Stupka E."/>
            <person name="Sugiura K."/>
            <person name="Sultana R."/>
            <person name="Takenaka Y."/>
            <person name="Taki K."/>
            <person name="Tammoja K."/>
            <person name="Tan S.L."/>
            <person name="Tang S."/>
            <person name="Taylor M.S."/>
            <person name="Tegner J."/>
            <person name="Teichmann S.A."/>
            <person name="Ueda H.R."/>
            <person name="van Nimwegen E."/>
            <person name="Verardo R."/>
            <person name="Wei C.L."/>
            <person name="Yagi K."/>
            <person name="Yamanishi H."/>
            <person name="Zabarovsky E."/>
            <person name="Zhu S."/>
            <person name="Zimmer A."/>
            <person name="Hide W."/>
            <person name="Bult C."/>
            <person name="Grimmond S.M."/>
            <person name="Teasdale R.D."/>
            <person name="Liu E.T."/>
            <person name="Brusic V."/>
            <person name="Quackenbush J."/>
            <person name="Wahlestedt C."/>
            <person name="Mattick J.S."/>
            <person name="Hume D.A."/>
            <person name="Kai C."/>
            <person name="Sasaki D."/>
            <person name="Tomaru Y."/>
            <person name="Fukuda S."/>
            <person name="Kanamori-Katayama M."/>
            <person name="Suzuki M."/>
            <person name="Aoki J."/>
            <person name="Arakawa T."/>
            <person name="Iida J."/>
            <person name="Imamura K."/>
            <person name="Itoh M."/>
            <person name="Kato T."/>
            <person name="Kawaji H."/>
            <person name="Kawagashira N."/>
            <person name="Kawashima T."/>
            <person name="Kojima M."/>
            <person name="Kondo S."/>
            <person name="Konno H."/>
            <person name="Nakano K."/>
            <person name="Ninomiya N."/>
            <person name="Nishio T."/>
            <person name="Okada M."/>
            <person name="Plessy C."/>
            <person name="Shibata K."/>
            <person name="Shiraki T."/>
            <person name="Suzuki S."/>
            <person name="Tagami M."/>
            <person name="Waki K."/>
            <person name="Watahiki A."/>
            <person name="Okamura-Oho Y."/>
            <person name="Suzuki H."/>
            <person name="Kawai J."/>
            <person name="Hayashizaki Y."/>
        </authorList>
    </citation>
    <scope>NUCLEOTIDE SEQUENCE [LARGE SCALE MRNA] (ISOFORMS 1 AND 2)</scope>
    <source>
        <strain>C57BL/6J</strain>
        <tissue>Embryo</tissue>
        <tissue>Hypothalamus</tissue>
    </source>
</reference>
<reference key="3">
    <citation type="journal article" date="2010" name="Cell">
        <title>A tissue-specific atlas of mouse protein phosphorylation and expression.</title>
        <authorList>
            <person name="Huttlin E.L."/>
            <person name="Jedrychowski M.P."/>
            <person name="Elias J.E."/>
            <person name="Goswami T."/>
            <person name="Rad R."/>
            <person name="Beausoleil S.A."/>
            <person name="Villen J."/>
            <person name="Haas W."/>
            <person name="Sowa M.E."/>
            <person name="Gygi S.P."/>
        </authorList>
    </citation>
    <scope>IDENTIFICATION BY MASS SPECTROMETRY [LARGE SCALE ANALYSIS]</scope>
    <source>
        <tissue>Brain</tissue>
        <tissue>Kidney</tissue>
        <tissue>Lung</tissue>
        <tissue>Spleen</tissue>
        <tissue>Testis</tissue>
    </source>
</reference>
<feature type="chain" id="PRO_0000050093" description="Poly(rC)-binding protein 3">
    <location>
        <begin position="1"/>
        <end position="371"/>
    </location>
</feature>
<feature type="domain" description="KH 1" evidence="2">
    <location>
        <begin position="45"/>
        <end position="95"/>
    </location>
</feature>
<feature type="domain" description="KH 2" evidence="2">
    <location>
        <begin position="129"/>
        <end position="182"/>
    </location>
</feature>
<feature type="domain" description="KH 3" evidence="2">
    <location>
        <begin position="293"/>
        <end position="357"/>
    </location>
</feature>
<feature type="splice variant" id="VSP_010015" description="In isoform 2." evidence="4">
    <location>
        <position position="240"/>
    </location>
</feature>
<feature type="sequence conflict" description="In Ref. 1; AAG09238." evidence="5" ref="1">
    <original>I</original>
    <variation>F</variation>
    <location>
        <position position="188"/>
    </location>
</feature>
<feature type="sequence conflict" description="In Ref. 1; AAG09238." evidence="5" ref="1">
    <original>S</original>
    <variation>C</variation>
    <location>
        <position position="216"/>
    </location>
</feature>
<comment type="function">
    <text evidence="1">Single-stranded nucleic acid binding protein that binds preferentially to oligo dC.</text>
</comment>
<comment type="subcellular location">
    <subcellularLocation>
        <location evidence="1">Cytoplasm</location>
    </subcellularLocation>
</comment>
<comment type="alternative products">
    <event type="alternative splicing"/>
    <isoform>
        <id>P57722-1</id>
        <name>1</name>
        <sequence type="displayed"/>
    </isoform>
    <isoform>
        <id>P57722-2</id>
        <name>2</name>
        <sequence type="described" ref="VSP_010015"/>
    </isoform>
</comment>
<comment type="tissue specificity">
    <text evidence="3">Widely expressed, with highest levels in testis and fat tissues and lowest in heart.</text>
</comment>
<comment type="miscellaneous">
    <molecule>Isoform 2</molecule>
    <text evidence="5">May be due to a competing acceptor splice site.</text>
</comment>
<comment type="sequence caution" evidence="5">
    <conflict type="erroneous initiation">
        <sequence resource="EMBL-CDS" id="AAG09238"/>
    </conflict>
    <text>Truncated N-terminus.</text>
</comment>